<protein>
    <recommendedName>
        <fullName evidence="16">Elongator complex protein 3</fullName>
        <shortName evidence="16">hELP3</shortName>
        <ecNumber evidence="2">2.3.1.311</ecNumber>
    </recommendedName>
    <alternativeName>
        <fullName evidence="20">tRNA uridine(34) acetyltransferase</fullName>
    </alternativeName>
</protein>
<comment type="function">
    <text evidence="2 4 10 14">Catalytic tRNA acetyltransferase subunit of the elongator complex which is required for multiple tRNA modifications, including mcm5U (5-methoxycarbonylmethyl uridine), mcm5s2U (5-methoxycarbonylmethyl-2-thiouridine), and ncm5U (5-carbamoylmethyl uridine) (PubMed:29415125). In the elongator complex, acts as a tRNA uridine(34) acetyltransferase by mediating formation of carboxymethyluridine in the wobble base at position 34 in tRNAs (By similarity). May also act as a protein lysine acetyltransferase by mediating acetylation of target proteins; such activity is however unclear in vivo and recent evidences suggest that ELP3 primarily acts as a tRNA acetyltransferase (PubMed:29415125). Involved in neurogenesis: regulates the migration and branching of projection neurons in the developing cerebral cortex, through a process depending on alpha-tubulin acetylation (PubMed:19185337). Required for acetylation of GJA1 in the developing cerebral cortex (By similarity).</text>
</comment>
<comment type="catalytic activity">
    <reaction evidence="2">
        <text>uridine(34) in tRNA + acetyl-CoA + S-adenosyl-L-methionine + H2O = 5-(carboxymethyl)uridine(34) in tRNA + 5'-deoxyadenosine + L-methionine + CoA + 2 H(+)</text>
        <dbReference type="Rhea" id="RHEA:61020"/>
        <dbReference type="Rhea" id="RHEA-COMP:10407"/>
        <dbReference type="Rhea" id="RHEA-COMP:11727"/>
        <dbReference type="ChEBI" id="CHEBI:15377"/>
        <dbReference type="ChEBI" id="CHEBI:15378"/>
        <dbReference type="ChEBI" id="CHEBI:17319"/>
        <dbReference type="ChEBI" id="CHEBI:57287"/>
        <dbReference type="ChEBI" id="CHEBI:57288"/>
        <dbReference type="ChEBI" id="CHEBI:57844"/>
        <dbReference type="ChEBI" id="CHEBI:59789"/>
        <dbReference type="ChEBI" id="CHEBI:65315"/>
        <dbReference type="ChEBI" id="CHEBI:74882"/>
        <dbReference type="EC" id="2.3.1.311"/>
    </reaction>
    <physiologicalReaction direction="left-to-right" evidence="2">
        <dbReference type="Rhea" id="RHEA:61021"/>
    </physiologicalReaction>
</comment>
<comment type="cofactor">
    <cofactor evidence="3">
        <name>[4Fe-4S] cluster</name>
        <dbReference type="ChEBI" id="CHEBI:49883"/>
    </cofactor>
    <text evidence="3">Binds 1 [4Fe-4S] cluster. The cluster is coordinated with 3 cysteines and an exchangeable S-adenosyl-L-methionine.</text>
</comment>
<comment type="pathway">
    <text evidence="14">tRNA modification; 5-methoxycarbonylmethyl-2-thiouridine-tRNA biosynthesis.</text>
</comment>
<comment type="subunit">
    <text evidence="7 8 10 12 13">Component of the elongator complex which consists of ELP1, ELP2, ELP3, ELP4, ELP5 and ELP6. ELP1, ELP2 and ELP3 form the elongator core complex (PubMed:11714725, PubMed:11818576, PubMed:19185337, PubMed:22854966, PubMed:25960406). Interacts with alpha-tubulin (PubMed:19185337).</text>
</comment>
<comment type="interaction">
    <interactant intactId="EBI-355217">
        <id>Q9H9T3</id>
    </interactant>
    <interactant intactId="EBI-347559">
        <id>O95163</id>
        <label>ELP1</label>
    </interactant>
    <organismsDiffer>false</organismsDiffer>
    <experiments>11</experiments>
</comment>
<comment type="subcellular location">
    <subcellularLocation>
        <location evidence="8 10 12">Cytoplasm</location>
    </subcellularLocation>
    <subcellularLocation>
        <location evidence="7 8 12">Nucleus</location>
    </subcellularLocation>
</comment>
<comment type="subcellular location">
    <molecule>Isoform 1</molecule>
    <subcellularLocation>
        <location evidence="11">Nucleus</location>
    </subcellularLocation>
</comment>
<comment type="subcellular location">
    <molecule>Isoform 2</molecule>
    <subcellularLocation>
        <location evidence="11">Cytoplasm</location>
    </subcellularLocation>
    <subcellularLocation>
        <location evidence="11">Nucleus</location>
    </subcellularLocation>
</comment>
<comment type="alternative products">
    <event type="alternative splicing"/>
    <isoform>
        <id>Q9H9T3-1</id>
        <name>1</name>
        <sequence type="displayed"/>
    </isoform>
    <isoform>
        <id>Q9H9T3-2</id>
        <name>2</name>
        <sequence type="described" ref="VSP_024406"/>
    </isoform>
    <isoform>
        <id>Q9H9T3-4</id>
        <name>3</name>
        <sequence type="described" ref="VSP_055285 VSP_055286"/>
    </isoform>
    <isoform>
        <id>Q9H9T3-5</id>
        <name>4</name>
        <sequence type="described" ref="VSP_055284"/>
    </isoform>
</comment>
<comment type="tissue specificity">
    <text evidence="9">Expressed in the cerebellum and spinal motor neurons.</text>
</comment>
<comment type="PTM">
    <text evidence="15">Tyrosine-phosphorylated; phosphorylation on Tyr-202 does not affect elongator complex integrity or ELP3 protein stability (PubMed:31341009). Also serine/threonine-phosphorylated (PubMed:31341009).</text>
</comment>
<comment type="disease" evidence="9 26">
    <disease id="DI-00107">
        <name>Amyotrophic lateral sclerosis</name>
        <acronym>ALS</acronym>
        <description>A neurodegenerative disorder affecting upper motor neurons in the brain and lower motor neurons in the brain stem and spinal cord, resulting in fatal paralysis. Sensory abnormalities are absent. The pathologic hallmarks of the disease include pallor of the corticospinal tract due to loss of motor neurons, presence of ubiquitin-positive inclusions within surviving motor neurons, and deposition of pathologic aggregates. The etiology of amyotrophic lateral sclerosis is likely to be multifactorial, involving both genetic and environmental factors. The disease is inherited in 5-10% of the cases.</description>
        <dbReference type="MIM" id="105400"/>
    </disease>
    <text>The gene represented in this entry may act as a disease modifier.</text>
</comment>
<comment type="similarity">
    <text evidence="20">Belongs to the ELP3 family.</text>
</comment>
<comment type="caution">
    <text evidence="21 22 23 24 25">The elongator complex was originally thought to play a role in transcription elongation. However, it is no longer thought to play a direct role in this process and its primary function is thought to be in tRNA modification.</text>
</comment>
<comment type="caution">
    <text evidence="4 14">The relevance of the protein lysine acetyltransferase activity is unclear (PubMed:29415125). The publication reporting acetylation of GJA1 does not provide direct evidence of lysine acetyltransferase activity of ELP3 (By similarity).</text>
</comment>
<comment type="sequence caution" evidence="20">
    <conflict type="miscellaneous discrepancy">
        <sequence resource="EMBL-CDS" id="BAA91600"/>
    </conflict>
    <text>Aberrant splicing.</text>
</comment>
<comment type="sequence caution" evidence="20">
    <conflict type="frameshift">
        <sequence resource="EMBL-CDS" id="CAH10573"/>
    </conflict>
</comment>
<dbReference type="EC" id="2.3.1.311" evidence="2"/>
<dbReference type="EMBL" id="AK001284">
    <property type="protein sequence ID" value="BAA91600.1"/>
    <property type="status" value="ALT_SEQ"/>
    <property type="molecule type" value="mRNA"/>
</dbReference>
<dbReference type="EMBL" id="AK022626">
    <property type="protein sequence ID" value="BAB14138.1"/>
    <property type="molecule type" value="mRNA"/>
</dbReference>
<dbReference type="EMBL" id="AK293424">
    <property type="protein sequence ID" value="BAG56930.1"/>
    <property type="molecule type" value="mRNA"/>
</dbReference>
<dbReference type="EMBL" id="AK295574">
    <property type="protein sequence ID" value="BAG58473.1"/>
    <property type="molecule type" value="mRNA"/>
</dbReference>
<dbReference type="EMBL" id="AK315985">
    <property type="protein sequence ID" value="BAH14356.1"/>
    <property type="molecule type" value="mRNA"/>
</dbReference>
<dbReference type="EMBL" id="AL834273">
    <property type="protein sequence ID" value="CAD38948.1"/>
    <property type="molecule type" value="mRNA"/>
</dbReference>
<dbReference type="EMBL" id="BX648011">
    <property type="protein sequence ID" value="CAH10573.1"/>
    <property type="status" value="ALT_FRAME"/>
    <property type="molecule type" value="mRNA"/>
</dbReference>
<dbReference type="EMBL" id="AC019031">
    <property type="status" value="NOT_ANNOTATED_CDS"/>
    <property type="molecule type" value="Genomic_DNA"/>
</dbReference>
<dbReference type="EMBL" id="AC021678">
    <property type="status" value="NOT_ANNOTATED_CDS"/>
    <property type="molecule type" value="Genomic_DNA"/>
</dbReference>
<dbReference type="EMBL" id="BC001240">
    <property type="protein sequence ID" value="AAH01240.1"/>
    <property type="molecule type" value="mRNA"/>
</dbReference>
<dbReference type="EMBL" id="AK223047">
    <property type="protein sequence ID" value="BAD96767.1"/>
    <property type="molecule type" value="mRNA"/>
</dbReference>
<dbReference type="CCDS" id="CCDS6065.1">
    <molecule id="Q9H9T3-1"/>
</dbReference>
<dbReference type="CCDS" id="CCDS64860.1">
    <molecule id="Q9H9T3-5"/>
</dbReference>
<dbReference type="CCDS" id="CCDS64861.1">
    <molecule id="Q9H9T3-4"/>
</dbReference>
<dbReference type="CCDS" id="CCDS75717.1">
    <molecule id="Q9H9T3-2"/>
</dbReference>
<dbReference type="RefSeq" id="NP_001271151.1">
    <molecule id="Q9H9T3-2"/>
    <property type="nucleotide sequence ID" value="NM_001284222.2"/>
</dbReference>
<dbReference type="RefSeq" id="NP_001271153.1">
    <molecule id="Q9H9T3-4"/>
    <property type="nucleotide sequence ID" value="NM_001284224.2"/>
</dbReference>
<dbReference type="RefSeq" id="NP_001271154.1">
    <molecule id="Q9H9T3-4"/>
    <property type="nucleotide sequence ID" value="NM_001284225.2"/>
</dbReference>
<dbReference type="RefSeq" id="NP_001271155.1">
    <molecule id="Q9H9T3-5"/>
    <property type="nucleotide sequence ID" value="NM_001284226.2"/>
</dbReference>
<dbReference type="RefSeq" id="NP_060561.3">
    <molecule id="Q9H9T3-1"/>
    <property type="nucleotide sequence ID" value="NM_018091.5"/>
</dbReference>
<dbReference type="RefSeq" id="XP_006716417.1">
    <property type="nucleotide sequence ID" value="XM_006716354.2"/>
</dbReference>
<dbReference type="RefSeq" id="XP_024302952.1">
    <molecule id="Q9H9T3-2"/>
    <property type="nucleotide sequence ID" value="XM_024447184.2"/>
</dbReference>
<dbReference type="RefSeq" id="XP_054216724.1">
    <molecule id="Q9H9T3-2"/>
    <property type="nucleotide sequence ID" value="XM_054360749.1"/>
</dbReference>
<dbReference type="PDB" id="8PTX">
    <property type="method" value="EM"/>
    <property type="resolution" value="2.87 A"/>
    <property type="chains" value="C=1-547"/>
</dbReference>
<dbReference type="PDB" id="8PTY">
    <property type="method" value="EM"/>
    <property type="resolution" value="3.58 A"/>
    <property type="chains" value="C=1-547"/>
</dbReference>
<dbReference type="PDB" id="8PTZ">
    <property type="method" value="EM"/>
    <property type="resolution" value="3.35 A"/>
    <property type="chains" value="C=1-547"/>
</dbReference>
<dbReference type="PDB" id="8PU0">
    <property type="method" value="EM"/>
    <property type="resolution" value="4.25 A"/>
    <property type="chains" value="C=1-547"/>
</dbReference>
<dbReference type="PDBsum" id="8PTX"/>
<dbReference type="PDBsum" id="8PTY"/>
<dbReference type="PDBsum" id="8PTZ"/>
<dbReference type="PDBsum" id="8PU0"/>
<dbReference type="EMDB" id="EMD-17924"/>
<dbReference type="EMDB" id="EMD-17925"/>
<dbReference type="EMDB" id="EMD-17926"/>
<dbReference type="EMDB" id="EMD-17927"/>
<dbReference type="SMR" id="Q9H9T3"/>
<dbReference type="BioGRID" id="120444">
    <property type="interactions" value="142"/>
</dbReference>
<dbReference type="ComplexPortal" id="CPX-1949">
    <property type="entry name" value="Elongator holoenzyme complex"/>
</dbReference>
<dbReference type="CORUM" id="Q9H9T3"/>
<dbReference type="DIP" id="DIP-53227N"/>
<dbReference type="FunCoup" id="Q9H9T3">
    <property type="interactions" value="3793"/>
</dbReference>
<dbReference type="IntAct" id="Q9H9T3">
    <property type="interactions" value="58"/>
</dbReference>
<dbReference type="MINT" id="Q9H9T3"/>
<dbReference type="STRING" id="9606.ENSP00000256398"/>
<dbReference type="CarbonylDB" id="Q9H9T3"/>
<dbReference type="GlyGen" id="Q9H9T3">
    <property type="glycosylation" value="1 site, 1 O-linked glycan (1 site)"/>
</dbReference>
<dbReference type="iPTMnet" id="Q9H9T3"/>
<dbReference type="PhosphoSitePlus" id="Q9H9T3"/>
<dbReference type="BioMuta" id="ELP3"/>
<dbReference type="DMDM" id="145558902"/>
<dbReference type="jPOST" id="Q9H9T3"/>
<dbReference type="MassIVE" id="Q9H9T3"/>
<dbReference type="PaxDb" id="9606-ENSP00000256398"/>
<dbReference type="PeptideAtlas" id="Q9H9T3"/>
<dbReference type="ProteomicsDB" id="3914"/>
<dbReference type="ProteomicsDB" id="4303"/>
<dbReference type="ProteomicsDB" id="81361">
    <molecule id="Q9H9T3-1"/>
</dbReference>
<dbReference type="ProteomicsDB" id="81362">
    <molecule id="Q9H9T3-2"/>
</dbReference>
<dbReference type="Pumba" id="Q9H9T3"/>
<dbReference type="Antibodypedia" id="23089">
    <property type="antibodies" value="220 antibodies from 32 providers"/>
</dbReference>
<dbReference type="DNASU" id="55140"/>
<dbReference type="Ensembl" id="ENST00000256398.13">
    <molecule id="Q9H9T3-1"/>
    <property type="protein sequence ID" value="ENSP00000256398.8"/>
    <property type="gene ID" value="ENSG00000134014.18"/>
</dbReference>
<dbReference type="Ensembl" id="ENST00000380353.8">
    <molecule id="Q9H9T3-5"/>
    <property type="protein sequence ID" value="ENSP00000369711.4"/>
    <property type="gene ID" value="ENSG00000134014.18"/>
</dbReference>
<dbReference type="Ensembl" id="ENST00000521015.5">
    <molecule id="Q9H9T3-2"/>
    <property type="protein sequence ID" value="ENSP00000428449.1"/>
    <property type="gene ID" value="ENSG00000134014.18"/>
</dbReference>
<dbReference type="Ensembl" id="ENST00000537665.2">
    <molecule id="Q9H9T3-4"/>
    <property type="protein sequence ID" value="ENSP00000445558.1"/>
    <property type="gene ID" value="ENSG00000134014.18"/>
</dbReference>
<dbReference type="GeneID" id="55140"/>
<dbReference type="KEGG" id="hsa:55140"/>
<dbReference type="MANE-Select" id="ENST00000256398.13">
    <property type="protein sequence ID" value="ENSP00000256398.8"/>
    <property type="RefSeq nucleotide sequence ID" value="NM_018091.6"/>
    <property type="RefSeq protein sequence ID" value="NP_060561.3"/>
</dbReference>
<dbReference type="UCSC" id="uc003xgn.6">
    <molecule id="Q9H9T3-1"/>
    <property type="organism name" value="human"/>
</dbReference>
<dbReference type="AGR" id="HGNC:20696"/>
<dbReference type="CTD" id="55140"/>
<dbReference type="DisGeNET" id="55140"/>
<dbReference type="GeneCards" id="ELP3"/>
<dbReference type="HGNC" id="HGNC:20696">
    <property type="gene designation" value="ELP3"/>
</dbReference>
<dbReference type="HPA" id="ENSG00000134014">
    <property type="expression patterns" value="Low tissue specificity"/>
</dbReference>
<dbReference type="MalaCards" id="ELP3"/>
<dbReference type="MIM" id="105400">
    <property type="type" value="phenotype"/>
</dbReference>
<dbReference type="MIM" id="612722">
    <property type="type" value="gene"/>
</dbReference>
<dbReference type="neXtProt" id="NX_Q9H9T3"/>
<dbReference type="OpenTargets" id="ENSG00000134014"/>
<dbReference type="PharmGKB" id="PA134992603"/>
<dbReference type="VEuPathDB" id="HostDB:ENSG00000134014"/>
<dbReference type="eggNOG" id="KOG2535">
    <property type="taxonomic scope" value="Eukaryota"/>
</dbReference>
<dbReference type="GeneTree" id="ENSGT00390000013141"/>
<dbReference type="InParanoid" id="Q9H9T3"/>
<dbReference type="OMA" id="TFETRPD"/>
<dbReference type="OrthoDB" id="10265243at2759"/>
<dbReference type="PAN-GO" id="Q9H9T3">
    <property type="GO annotations" value="4 GO annotations based on evolutionary models"/>
</dbReference>
<dbReference type="PhylomeDB" id="Q9H9T3"/>
<dbReference type="TreeFam" id="TF105752"/>
<dbReference type="BioCyc" id="MetaCyc:HS05804-MONOMER"/>
<dbReference type="BRENDA" id="2.3.1.48">
    <property type="organism ID" value="2681"/>
</dbReference>
<dbReference type="PathwayCommons" id="Q9H9T3"/>
<dbReference type="Reactome" id="R-HSA-3214847">
    <property type="pathway name" value="HATs acetylate histones"/>
</dbReference>
<dbReference type="SignaLink" id="Q9H9T3"/>
<dbReference type="SIGNOR" id="Q9H9T3"/>
<dbReference type="UniPathway" id="UPA00988"/>
<dbReference type="BioGRID-ORCS" id="55140">
    <property type="hits" value="729 hits in 1179 CRISPR screens"/>
</dbReference>
<dbReference type="ChiTaRS" id="ELP3">
    <property type="organism name" value="human"/>
</dbReference>
<dbReference type="GeneWiki" id="ELP3"/>
<dbReference type="GenomeRNAi" id="55140"/>
<dbReference type="Pharos" id="Q9H9T3">
    <property type="development level" value="Tbio"/>
</dbReference>
<dbReference type="PRO" id="PR:Q9H9T3"/>
<dbReference type="Proteomes" id="UP000005640">
    <property type="component" value="Chromosome 8"/>
</dbReference>
<dbReference type="RNAct" id="Q9H9T3">
    <property type="molecule type" value="protein"/>
</dbReference>
<dbReference type="Bgee" id="ENSG00000134014">
    <property type="expression patterns" value="Expressed in endothelial cell and 202 other cell types or tissues"/>
</dbReference>
<dbReference type="ExpressionAtlas" id="Q9H9T3">
    <property type="expression patterns" value="baseline and differential"/>
</dbReference>
<dbReference type="GO" id="GO:0005737">
    <property type="term" value="C:cytoplasm"/>
    <property type="evidence" value="ECO:0000314"/>
    <property type="project" value="UniProtKB"/>
</dbReference>
<dbReference type="GO" id="GO:0005829">
    <property type="term" value="C:cytosol"/>
    <property type="evidence" value="ECO:0000314"/>
    <property type="project" value="HPA"/>
</dbReference>
<dbReference type="GO" id="GO:0033588">
    <property type="term" value="C:elongator holoenzyme complex"/>
    <property type="evidence" value="ECO:0000314"/>
    <property type="project" value="UniProtKB"/>
</dbReference>
<dbReference type="GO" id="GO:0005730">
    <property type="term" value="C:nucleolus"/>
    <property type="evidence" value="ECO:0000314"/>
    <property type="project" value="HGNC-UCL"/>
</dbReference>
<dbReference type="GO" id="GO:0005634">
    <property type="term" value="C:nucleus"/>
    <property type="evidence" value="ECO:0000318"/>
    <property type="project" value="GO_Central"/>
</dbReference>
<dbReference type="GO" id="GO:0051539">
    <property type="term" value="F:4 iron, 4 sulfur cluster binding"/>
    <property type="evidence" value="ECO:0007669"/>
    <property type="project" value="UniProtKB-KW"/>
</dbReference>
<dbReference type="GO" id="GO:0016407">
    <property type="term" value="F:acetyltransferase activity"/>
    <property type="evidence" value="ECO:0000314"/>
    <property type="project" value="BHF-UCL"/>
</dbReference>
<dbReference type="GO" id="GO:0046872">
    <property type="term" value="F:metal ion binding"/>
    <property type="evidence" value="ECO:0007669"/>
    <property type="project" value="UniProtKB-KW"/>
</dbReference>
<dbReference type="GO" id="GO:0008607">
    <property type="term" value="F:phosphorylase kinase regulator activity"/>
    <property type="evidence" value="ECO:0000314"/>
    <property type="project" value="UniProtKB"/>
</dbReference>
<dbReference type="GO" id="GO:0000049">
    <property type="term" value="F:tRNA binding"/>
    <property type="evidence" value="ECO:0007669"/>
    <property type="project" value="UniProtKB-KW"/>
</dbReference>
<dbReference type="GO" id="GO:0106261">
    <property type="term" value="F:tRNA uridine(34) acetyltransferase activity"/>
    <property type="evidence" value="ECO:0000250"/>
    <property type="project" value="UniProtKB"/>
</dbReference>
<dbReference type="GO" id="GO:0007417">
    <property type="term" value="P:central nervous system development"/>
    <property type="evidence" value="ECO:0000250"/>
    <property type="project" value="UniProtKB"/>
</dbReference>
<dbReference type="GO" id="GO:0001764">
    <property type="term" value="P:neuron migration"/>
    <property type="evidence" value="ECO:0000250"/>
    <property type="project" value="UniProtKB"/>
</dbReference>
<dbReference type="GO" id="GO:0030335">
    <property type="term" value="P:positive regulation of cell migration"/>
    <property type="evidence" value="ECO:0000250"/>
    <property type="project" value="UniProtKB"/>
</dbReference>
<dbReference type="GO" id="GO:0006357">
    <property type="term" value="P:regulation of transcription by RNA polymerase II"/>
    <property type="evidence" value="ECO:0000314"/>
    <property type="project" value="UniProtKB"/>
</dbReference>
<dbReference type="GO" id="GO:0006417">
    <property type="term" value="P:regulation of translation"/>
    <property type="evidence" value="ECO:0000303"/>
    <property type="project" value="ComplexPortal"/>
</dbReference>
<dbReference type="GO" id="GO:0002926">
    <property type="term" value="P:tRNA wobble base 5-methoxycarbonylmethyl-2-thiouridinylation"/>
    <property type="evidence" value="ECO:0000318"/>
    <property type="project" value="GO_Central"/>
</dbReference>
<dbReference type="GO" id="GO:0002098">
    <property type="term" value="P:tRNA wobble uridine modification"/>
    <property type="evidence" value="ECO:0000314"/>
    <property type="project" value="UniProtKB"/>
</dbReference>
<dbReference type="CDD" id="cd01335">
    <property type="entry name" value="Radical_SAM"/>
    <property type="match status" value="1"/>
</dbReference>
<dbReference type="FunFam" id="3.40.630.30:FF:000003">
    <property type="entry name" value="Elongator complex protein 3"/>
    <property type="match status" value="1"/>
</dbReference>
<dbReference type="Gene3D" id="3.40.630.30">
    <property type="match status" value="1"/>
</dbReference>
<dbReference type="InterPro" id="IPR016181">
    <property type="entry name" value="Acyl_CoA_acyltransferase"/>
</dbReference>
<dbReference type="InterPro" id="IPR039661">
    <property type="entry name" value="ELP3"/>
</dbReference>
<dbReference type="InterPro" id="IPR034687">
    <property type="entry name" value="ELP3-like"/>
</dbReference>
<dbReference type="InterPro" id="IPR056591">
    <property type="entry name" value="ELP3-like_N"/>
</dbReference>
<dbReference type="InterPro" id="IPR006638">
    <property type="entry name" value="Elp3/MiaA/NifB-like_rSAM"/>
</dbReference>
<dbReference type="InterPro" id="IPR000182">
    <property type="entry name" value="GNAT_dom"/>
</dbReference>
<dbReference type="InterPro" id="IPR032432">
    <property type="entry name" value="Radical_SAM_C"/>
</dbReference>
<dbReference type="InterPro" id="IPR007197">
    <property type="entry name" value="rSAM"/>
</dbReference>
<dbReference type="NCBIfam" id="TIGR01211">
    <property type="entry name" value="ELP3"/>
    <property type="match status" value="1"/>
</dbReference>
<dbReference type="PANTHER" id="PTHR11135:SF0">
    <property type="entry name" value="ELONGATOR COMPLEX PROTEIN 3"/>
    <property type="match status" value="1"/>
</dbReference>
<dbReference type="PANTHER" id="PTHR11135">
    <property type="entry name" value="HISTONE ACETYLTRANSFERASE-RELATED"/>
    <property type="match status" value="1"/>
</dbReference>
<dbReference type="Pfam" id="PF23613">
    <property type="entry name" value="ELP3_N"/>
    <property type="match status" value="1"/>
</dbReference>
<dbReference type="Pfam" id="PF04055">
    <property type="entry name" value="Radical_SAM"/>
    <property type="match status" value="1"/>
</dbReference>
<dbReference type="Pfam" id="PF16199">
    <property type="entry name" value="Radical_SAM_C"/>
    <property type="match status" value="1"/>
</dbReference>
<dbReference type="PIRSF" id="PIRSF005669">
    <property type="entry name" value="Hist_AcTrfase_ELP3"/>
    <property type="match status" value="1"/>
</dbReference>
<dbReference type="SFLD" id="SFLDF00344">
    <property type="entry name" value="ELP3-like"/>
    <property type="match status" value="1"/>
</dbReference>
<dbReference type="SFLD" id="SFLDS00029">
    <property type="entry name" value="Radical_SAM"/>
    <property type="match status" value="1"/>
</dbReference>
<dbReference type="SMART" id="SM00729">
    <property type="entry name" value="Elp3"/>
    <property type="match status" value="1"/>
</dbReference>
<dbReference type="SUPFAM" id="SSF55729">
    <property type="entry name" value="Acyl-CoA N-acyltransferases (Nat)"/>
    <property type="match status" value="1"/>
</dbReference>
<dbReference type="SUPFAM" id="SSF102114">
    <property type="entry name" value="Radical SAM enzymes"/>
    <property type="match status" value="1"/>
</dbReference>
<dbReference type="PROSITE" id="PS51186">
    <property type="entry name" value="GNAT"/>
    <property type="match status" value="1"/>
</dbReference>
<dbReference type="PROSITE" id="PS51918">
    <property type="entry name" value="RADICAL_SAM"/>
    <property type="match status" value="1"/>
</dbReference>
<proteinExistence type="evidence at protein level"/>
<gene>
    <name evidence="18 27" type="primary">ELP3</name>
</gene>
<evidence type="ECO:0000250" key="1">
    <source>
        <dbReference type="UniProtKB" id="A0A1C7D1B7"/>
    </source>
</evidence>
<evidence type="ECO:0000250" key="2">
    <source>
        <dbReference type="UniProtKB" id="D5VRB9"/>
    </source>
</evidence>
<evidence type="ECO:0000250" key="3">
    <source>
        <dbReference type="UniProtKB" id="Q02908"/>
    </source>
</evidence>
<evidence type="ECO:0000250" key="4">
    <source>
        <dbReference type="UniProtKB" id="Q9CZX0"/>
    </source>
</evidence>
<evidence type="ECO:0000255" key="5">
    <source>
        <dbReference type="PROSITE-ProRule" id="PRU00532"/>
    </source>
</evidence>
<evidence type="ECO:0000255" key="6">
    <source>
        <dbReference type="PROSITE-ProRule" id="PRU01266"/>
    </source>
</evidence>
<evidence type="ECO:0000269" key="7">
    <source>
    </source>
</evidence>
<evidence type="ECO:0000269" key="8">
    <source>
    </source>
</evidence>
<evidence type="ECO:0000269" key="9">
    <source>
    </source>
</evidence>
<evidence type="ECO:0000269" key="10">
    <source>
    </source>
</evidence>
<evidence type="ECO:0000269" key="11">
    <source>
    </source>
</evidence>
<evidence type="ECO:0000269" key="12">
    <source>
    </source>
</evidence>
<evidence type="ECO:0000269" key="13">
    <source>
    </source>
</evidence>
<evidence type="ECO:0000269" key="14">
    <source>
    </source>
</evidence>
<evidence type="ECO:0000269" key="15">
    <source>
    </source>
</evidence>
<evidence type="ECO:0000303" key="16">
    <source>
    </source>
</evidence>
<evidence type="ECO:0000303" key="17">
    <source>
    </source>
</evidence>
<evidence type="ECO:0000303" key="18">
    <source>
    </source>
</evidence>
<evidence type="ECO:0000303" key="19">
    <source>
    </source>
</evidence>
<evidence type="ECO:0000305" key="20"/>
<evidence type="ECO:0000305" key="21">
    <source>
    </source>
</evidence>
<evidence type="ECO:0000305" key="22">
    <source>
    </source>
</evidence>
<evidence type="ECO:0000305" key="23">
    <source>
    </source>
</evidence>
<evidence type="ECO:0000305" key="24">
    <source>
    </source>
</evidence>
<evidence type="ECO:0000305" key="25">
    <source>
    </source>
</evidence>
<evidence type="ECO:0000305" key="26">
    <source>
    </source>
</evidence>
<evidence type="ECO:0000312" key="27">
    <source>
        <dbReference type="HGNC" id="HGNC:20696"/>
    </source>
</evidence>
<evidence type="ECO:0007744" key="28">
    <source>
    </source>
</evidence>
<evidence type="ECO:0007744" key="29">
    <source>
    </source>
</evidence>
<evidence type="ECO:0007829" key="30">
    <source>
        <dbReference type="PDB" id="8PTX"/>
    </source>
</evidence>
<evidence type="ECO:0007829" key="31">
    <source>
        <dbReference type="PDB" id="8PTZ"/>
    </source>
</evidence>
<accession>Q9H9T3</accession>
<accession>B4DE19</accession>
<accession>B4DIG1</accession>
<accession>E2QRI5</accession>
<accession>Q53G84</accession>
<accession>Q6AWB0</accession>
<accession>Q9BVF7</accession>
<accession>Q9NVZ1</accession>
<organism>
    <name type="scientific">Homo sapiens</name>
    <name type="common">Human</name>
    <dbReference type="NCBI Taxonomy" id="9606"/>
    <lineage>
        <taxon>Eukaryota</taxon>
        <taxon>Metazoa</taxon>
        <taxon>Chordata</taxon>
        <taxon>Craniata</taxon>
        <taxon>Vertebrata</taxon>
        <taxon>Euteleostomi</taxon>
        <taxon>Mammalia</taxon>
        <taxon>Eutheria</taxon>
        <taxon>Euarchontoglires</taxon>
        <taxon>Primates</taxon>
        <taxon>Haplorrhini</taxon>
        <taxon>Catarrhini</taxon>
        <taxon>Hominidae</taxon>
        <taxon>Homo</taxon>
    </lineage>
</organism>
<sequence>MRQKRKGDLSPAELMMLTIGDVIKQLIEAHEQGKDIDLNKVKTKTAAKYGLSAQPRLVDIIAAVPPQYRKVLMPKLKAKPIRTASGIAVVAVMCKPHRCPHISFTGNICVYCPGGPDSDFEYSTQSYTGYEPTSMRAIRARYDPFLQTRHRIEQLKQLGHSVDKVEFIVMGGTFMALPEEYRDYFIRNLHDALSGHTSNNIYEAVKYSERSLTKCIGITIETRPDYCMKRHLSDMLTYGCTRLEIGVQSVYEDVARDTNRGHTVKAVCESFHLAKDSGFKVVAHMMPDLPNVGLERDIEQFTEFFENPAFRPDGLKLYPTLVIRGTGLYELWKSGRYKSYSPSDLVELVARILALVPPWTRVYRVQRDIPMPLVSSGVEHGNLRELALARMKDLGIQCRDVRTREVGIQEIHHKVRPYQVELVRRDYVANGGWETFLSYEDPDQDILIGLLRLRKCSEETFRFELGGGVSIVRELHVYGSVVPVSSRDPTKFQHQGFGMLLMEEAERIAREEHGSGKIAVISGVGTRNYYRKIGYRLQGPYMVKMLK</sequence>
<name>ELP3_HUMAN</name>
<feature type="chain" id="PRO_0000283986" description="Elongator complex protein 3">
    <location>
        <begin position="1"/>
        <end position="547"/>
    </location>
</feature>
<feature type="domain" description="Radical SAM core" evidence="6">
    <location>
        <begin position="82"/>
        <end position="372"/>
    </location>
</feature>
<feature type="domain" description="N-acetyltransferase" evidence="5">
    <location>
        <begin position="396"/>
        <end position="547"/>
    </location>
</feature>
<feature type="binding site" evidence="3">
    <location>
        <position position="99"/>
    </location>
    <ligand>
        <name>[4Fe-4S] cluster</name>
        <dbReference type="ChEBI" id="CHEBI:49883"/>
        <note>4Fe-4S-S-AdoMet</note>
    </ligand>
</feature>
<feature type="binding site" evidence="3">
    <location>
        <position position="109"/>
    </location>
    <ligand>
        <name>[4Fe-4S] cluster</name>
        <dbReference type="ChEBI" id="CHEBI:49883"/>
        <note>4Fe-4S-S-AdoMet</note>
    </ligand>
</feature>
<feature type="binding site" evidence="3">
    <location>
        <position position="112"/>
    </location>
    <ligand>
        <name>[4Fe-4S] cluster</name>
        <dbReference type="ChEBI" id="CHEBI:49883"/>
        <note>4Fe-4S-S-AdoMet</note>
    </ligand>
</feature>
<feature type="binding site" evidence="1">
    <location>
        <position position="164"/>
    </location>
    <ligand>
        <name>acetyl-CoA</name>
        <dbReference type="ChEBI" id="CHEBI:57288"/>
    </ligand>
</feature>
<feature type="binding site" evidence="1">
    <location>
        <begin position="474"/>
        <end position="477"/>
    </location>
    <ligand>
        <name>acetyl-CoA</name>
        <dbReference type="ChEBI" id="CHEBI:57288"/>
    </ligand>
</feature>
<feature type="binding site" evidence="1">
    <location>
        <begin position="497"/>
        <end position="499"/>
    </location>
    <ligand>
        <name>acetyl-CoA</name>
        <dbReference type="ChEBI" id="CHEBI:57288"/>
    </ligand>
</feature>
<feature type="binding site" evidence="1">
    <location>
        <position position="530"/>
    </location>
    <ligand>
        <name>acetyl-CoA</name>
        <dbReference type="ChEBI" id="CHEBI:57288"/>
    </ligand>
</feature>
<feature type="modified residue" description="Phosphoserine" evidence="4">
    <location>
        <position position="161"/>
    </location>
</feature>
<feature type="modified residue" description="Phosphotyrosine; by ALK" evidence="15 28">
    <location>
        <position position="202"/>
    </location>
</feature>
<feature type="modified residue" description="N6-methyllysine" evidence="29">
    <location>
        <position position="229"/>
    </location>
</feature>
<feature type="modified residue" description="Phosphotyrosine" evidence="15">
    <location>
        <position position="251"/>
    </location>
</feature>
<feature type="splice variant" id="VSP_055284" description="In isoform 4." evidence="17">
    <location>
        <begin position="1"/>
        <end position="92"/>
    </location>
</feature>
<feature type="splice variant" id="VSP_024406" description="In isoform 2." evidence="19">
    <location>
        <begin position="1"/>
        <end position="14"/>
    </location>
</feature>
<feature type="splice variant" id="VSP_055285" description="In isoform 3." evidence="17">
    <original>MRQKRKGDLSPA</original>
    <variation>MSTHQFYRKYMC</variation>
    <location>
        <begin position="1"/>
        <end position="12"/>
    </location>
</feature>
<feature type="splice variant" id="VSP_055286" description="In isoform 3." evidence="17">
    <location>
        <begin position="13"/>
        <end position="131"/>
    </location>
</feature>
<feature type="mutagenesis site" description="Substantial reduction in tyrosine phosphorylation." evidence="15">
    <original>Y</original>
    <variation>E</variation>
    <variation>F</variation>
    <location>
        <position position="202"/>
    </location>
</feature>
<feature type="mutagenesis site" description="No effect on tyrosine phosphorylation." evidence="15">
    <original>Y</original>
    <variation>F</variation>
    <location>
        <position position="207"/>
    </location>
</feature>
<feature type="mutagenesis site" description="Small reduction in tyrosine phosphorylation." evidence="15">
    <original>Y</original>
    <variation>F</variation>
    <location>
        <position position="251"/>
    </location>
</feature>
<feature type="mutagenesis site" description="No effect on tyrosine phosphorylation." evidence="15">
    <original>Y</original>
    <variation>F</variation>
    <location>
        <position position="318"/>
    </location>
</feature>
<feature type="mutagenesis site" description="No effect on tyrosine phosphorylation." evidence="15">
    <original>Y</original>
    <variation>F</variation>
    <location>
        <position position="329"/>
    </location>
</feature>
<feature type="mutagenesis site" description="No effect on tyrosine phosphorylation." evidence="15">
    <original>Y</original>
    <variation>F</variation>
    <location>
        <position position="427"/>
    </location>
</feature>
<feature type="sequence conflict" description="In Ref. 1; BAA91600." evidence="20" ref="1">
    <original>S</original>
    <variation>G</variation>
    <location>
        <position position="10"/>
    </location>
</feature>
<feature type="sequence conflict" description="In Ref. 5; BAD96767." evidence="20" ref="5">
    <original>H</original>
    <variation>Y</variation>
    <location>
        <position position="30"/>
    </location>
</feature>
<feature type="sequence conflict" description="In Ref. 2; CAH10573." evidence="20" ref="2">
    <original>E</original>
    <variation>K</variation>
    <location>
        <position position="179"/>
    </location>
</feature>
<feature type="sequence conflict" description="In Ref. 1; BAB14138." evidence="20" ref="1">
    <original>K</original>
    <variation>M</variation>
    <location>
        <position position="265"/>
    </location>
</feature>
<feature type="helix" evidence="30">
    <location>
        <begin position="11"/>
        <end position="32"/>
    </location>
</feature>
<feature type="helix" evidence="30">
    <location>
        <begin position="38"/>
        <end position="48"/>
    </location>
</feature>
<feature type="helix" evidence="30">
    <location>
        <begin position="57"/>
        <end position="61"/>
    </location>
</feature>
<feature type="helix" evidence="30">
    <location>
        <begin position="66"/>
        <end position="71"/>
    </location>
</feature>
<feature type="helix" evidence="30">
    <location>
        <begin position="73"/>
        <end position="76"/>
    </location>
</feature>
<feature type="helix" evidence="30">
    <location>
        <begin position="80"/>
        <end position="83"/>
    </location>
</feature>
<feature type="strand" evidence="30">
    <location>
        <begin position="86"/>
        <end position="93"/>
    </location>
</feature>
<feature type="helix" evidence="30">
    <location>
        <begin position="100"/>
        <end position="102"/>
    </location>
</feature>
<feature type="turn" evidence="30">
    <location>
        <begin position="103"/>
        <end position="105"/>
    </location>
</feature>
<feature type="strand" evidence="30">
    <location>
        <begin position="116"/>
        <end position="120"/>
    </location>
</feature>
<feature type="helix" evidence="30">
    <location>
        <begin position="132"/>
        <end position="139"/>
    </location>
</feature>
<feature type="helix" evidence="30">
    <location>
        <begin position="144"/>
        <end position="158"/>
    </location>
</feature>
<feature type="strand" evidence="30">
    <location>
        <begin position="163"/>
        <end position="172"/>
    </location>
</feature>
<feature type="helix" evidence="30">
    <location>
        <begin position="174"/>
        <end position="176"/>
    </location>
</feature>
<feature type="helix" evidence="30">
    <location>
        <begin position="179"/>
        <end position="194"/>
    </location>
</feature>
<feature type="helix" evidence="30">
    <location>
        <begin position="201"/>
        <end position="209"/>
    </location>
</feature>
<feature type="strand" evidence="30">
    <location>
        <begin position="212"/>
        <end position="221"/>
    </location>
</feature>
<feature type="helix" evidence="30">
    <location>
        <begin position="224"/>
        <end position="226"/>
    </location>
</feature>
<feature type="helix" evidence="30">
    <location>
        <begin position="229"/>
        <end position="238"/>
    </location>
</feature>
<feature type="strand" evidence="30">
    <location>
        <begin position="240"/>
        <end position="248"/>
    </location>
</feature>
<feature type="helix" evidence="30">
    <location>
        <begin position="254"/>
        <end position="257"/>
    </location>
</feature>
<feature type="helix" evidence="30">
    <location>
        <begin position="264"/>
        <end position="277"/>
    </location>
</feature>
<feature type="strand" evidence="30">
    <location>
        <begin position="281"/>
        <end position="285"/>
    </location>
</feature>
<feature type="helix" evidence="30">
    <location>
        <begin position="296"/>
        <end position="306"/>
    </location>
</feature>
<feature type="turn" evidence="30">
    <location>
        <begin position="308"/>
        <end position="310"/>
    </location>
</feature>
<feature type="strand" evidence="30">
    <location>
        <begin position="313"/>
        <end position="317"/>
    </location>
</feature>
<feature type="strand" evidence="30">
    <location>
        <begin position="322"/>
        <end position="326"/>
    </location>
</feature>
<feature type="helix" evidence="30">
    <location>
        <begin position="327"/>
        <end position="333"/>
    </location>
</feature>
<feature type="helix" evidence="30">
    <location>
        <begin position="342"/>
        <end position="353"/>
    </location>
</feature>
<feature type="strand" evidence="30">
    <location>
        <begin position="361"/>
        <end position="366"/>
    </location>
</feature>
<feature type="helix" evidence="30">
    <location>
        <begin position="371"/>
        <end position="373"/>
    </location>
</feature>
<feature type="strand" evidence="30">
    <location>
        <begin position="374"/>
        <end position="377"/>
    </location>
</feature>
<feature type="helix" evidence="30">
    <location>
        <begin position="383"/>
        <end position="394"/>
    </location>
</feature>
<feature type="helix" evidence="30">
    <location>
        <begin position="402"/>
        <end position="404"/>
    </location>
</feature>
<feature type="helix" evidence="30">
    <location>
        <begin position="406"/>
        <end position="411"/>
    </location>
</feature>
<feature type="strand" evidence="31">
    <location>
        <begin position="412"/>
        <end position="414"/>
    </location>
</feature>
<feature type="strand" evidence="30">
    <location>
        <begin position="421"/>
        <end position="429"/>
    </location>
</feature>
<feature type="strand" evidence="30">
    <location>
        <begin position="432"/>
        <end position="441"/>
    </location>
</feature>
<feature type="turn" evidence="30">
    <location>
        <begin position="442"/>
        <end position="445"/>
    </location>
</feature>
<feature type="strand" evidence="30">
    <location>
        <begin position="446"/>
        <end position="455"/>
    </location>
</feature>
<feature type="helix" evidence="30">
    <location>
        <begin position="463"/>
        <end position="465"/>
    </location>
</feature>
<feature type="turn" evidence="30">
    <location>
        <begin position="466"/>
        <end position="468"/>
    </location>
</feature>
<feature type="strand" evidence="30">
    <location>
        <begin position="469"/>
        <end position="477"/>
    </location>
</feature>
<feature type="strand" evidence="30">
    <location>
        <begin position="491"/>
        <end position="493"/>
    </location>
</feature>
<feature type="turn" evidence="30">
    <location>
        <begin position="494"/>
        <end position="496"/>
    </location>
</feature>
<feature type="helix" evidence="30">
    <location>
        <begin position="497"/>
        <end position="511"/>
    </location>
</feature>
<feature type="strand" evidence="30">
    <location>
        <begin position="516"/>
        <end position="520"/>
    </location>
</feature>
<feature type="helix" evidence="30">
    <location>
        <begin position="525"/>
        <end position="533"/>
    </location>
</feature>
<feature type="strand" evidence="30">
    <location>
        <begin position="536"/>
        <end position="538"/>
    </location>
</feature>
<feature type="strand" evidence="30">
    <location>
        <begin position="541"/>
        <end position="545"/>
    </location>
</feature>
<keyword id="KW-0002">3D-structure</keyword>
<keyword id="KW-0004">4Fe-4S</keyword>
<keyword id="KW-0012">Acyltransferase</keyword>
<keyword id="KW-0025">Alternative splicing</keyword>
<keyword id="KW-0036">Amyotrophic lateral sclerosis</keyword>
<keyword id="KW-0963">Cytoplasm</keyword>
<keyword id="KW-0408">Iron</keyword>
<keyword id="KW-0411">Iron-sulfur</keyword>
<keyword id="KW-0479">Metal-binding</keyword>
<keyword id="KW-0488">Methylation</keyword>
<keyword id="KW-0523">Neurodegeneration</keyword>
<keyword id="KW-0524">Neurogenesis</keyword>
<keyword id="KW-0539">Nucleus</keyword>
<keyword id="KW-0597">Phosphoprotein</keyword>
<keyword id="KW-1267">Proteomics identification</keyword>
<keyword id="KW-1185">Reference proteome</keyword>
<keyword id="KW-0694">RNA-binding</keyword>
<keyword id="KW-0949">S-adenosyl-L-methionine</keyword>
<keyword id="KW-0808">Transferase</keyword>
<keyword id="KW-0819">tRNA processing</keyword>
<keyword id="KW-0820">tRNA-binding</keyword>
<reference key="1">
    <citation type="journal article" date="2004" name="Nat. Genet.">
        <title>Complete sequencing and characterization of 21,243 full-length human cDNAs.</title>
        <authorList>
            <person name="Ota T."/>
            <person name="Suzuki Y."/>
            <person name="Nishikawa T."/>
            <person name="Otsuki T."/>
            <person name="Sugiyama T."/>
            <person name="Irie R."/>
            <person name="Wakamatsu A."/>
            <person name="Hayashi K."/>
            <person name="Sato H."/>
            <person name="Nagai K."/>
            <person name="Kimura K."/>
            <person name="Makita H."/>
            <person name="Sekine M."/>
            <person name="Obayashi M."/>
            <person name="Nishi T."/>
            <person name="Shibahara T."/>
            <person name="Tanaka T."/>
            <person name="Ishii S."/>
            <person name="Yamamoto J."/>
            <person name="Saito K."/>
            <person name="Kawai Y."/>
            <person name="Isono Y."/>
            <person name="Nakamura Y."/>
            <person name="Nagahari K."/>
            <person name="Murakami K."/>
            <person name="Yasuda T."/>
            <person name="Iwayanagi T."/>
            <person name="Wagatsuma M."/>
            <person name="Shiratori A."/>
            <person name="Sudo H."/>
            <person name="Hosoiri T."/>
            <person name="Kaku Y."/>
            <person name="Kodaira H."/>
            <person name="Kondo H."/>
            <person name="Sugawara M."/>
            <person name="Takahashi M."/>
            <person name="Kanda K."/>
            <person name="Yokoi T."/>
            <person name="Furuya T."/>
            <person name="Kikkawa E."/>
            <person name="Omura Y."/>
            <person name="Abe K."/>
            <person name="Kamihara K."/>
            <person name="Katsuta N."/>
            <person name="Sato K."/>
            <person name="Tanikawa M."/>
            <person name="Yamazaki M."/>
            <person name="Ninomiya K."/>
            <person name="Ishibashi T."/>
            <person name="Yamashita H."/>
            <person name="Murakawa K."/>
            <person name="Fujimori K."/>
            <person name="Tanai H."/>
            <person name="Kimata M."/>
            <person name="Watanabe M."/>
            <person name="Hiraoka S."/>
            <person name="Chiba Y."/>
            <person name="Ishida S."/>
            <person name="Ono Y."/>
            <person name="Takiguchi S."/>
            <person name="Watanabe S."/>
            <person name="Yosida M."/>
            <person name="Hotuta T."/>
            <person name="Kusano J."/>
            <person name="Kanehori K."/>
            <person name="Takahashi-Fujii A."/>
            <person name="Hara H."/>
            <person name="Tanase T.-O."/>
            <person name="Nomura Y."/>
            <person name="Togiya S."/>
            <person name="Komai F."/>
            <person name="Hara R."/>
            <person name="Takeuchi K."/>
            <person name="Arita M."/>
            <person name="Imose N."/>
            <person name="Musashino K."/>
            <person name="Yuuki H."/>
            <person name="Oshima A."/>
            <person name="Sasaki N."/>
            <person name="Aotsuka S."/>
            <person name="Yoshikawa Y."/>
            <person name="Matsunawa H."/>
            <person name="Ichihara T."/>
            <person name="Shiohata N."/>
            <person name="Sano S."/>
            <person name="Moriya S."/>
            <person name="Momiyama H."/>
            <person name="Satoh N."/>
            <person name="Takami S."/>
            <person name="Terashima Y."/>
            <person name="Suzuki O."/>
            <person name="Nakagawa S."/>
            <person name="Senoh A."/>
            <person name="Mizoguchi H."/>
            <person name="Goto Y."/>
            <person name="Shimizu F."/>
            <person name="Wakebe H."/>
            <person name="Hishigaki H."/>
            <person name="Watanabe T."/>
            <person name="Sugiyama A."/>
            <person name="Takemoto M."/>
            <person name="Kawakami B."/>
            <person name="Yamazaki M."/>
            <person name="Watanabe K."/>
            <person name="Kumagai A."/>
            <person name="Itakura S."/>
            <person name="Fukuzumi Y."/>
            <person name="Fujimori Y."/>
            <person name="Komiyama M."/>
            <person name="Tashiro H."/>
            <person name="Tanigami A."/>
            <person name="Fujiwara T."/>
            <person name="Ono T."/>
            <person name="Yamada K."/>
            <person name="Fujii Y."/>
            <person name="Ozaki K."/>
            <person name="Hirao M."/>
            <person name="Ohmori Y."/>
            <person name="Kawabata A."/>
            <person name="Hikiji T."/>
            <person name="Kobatake N."/>
            <person name="Inagaki H."/>
            <person name="Ikema Y."/>
            <person name="Okamoto S."/>
            <person name="Okitani R."/>
            <person name="Kawakami T."/>
            <person name="Noguchi S."/>
            <person name="Itoh T."/>
            <person name="Shigeta K."/>
            <person name="Senba T."/>
            <person name="Matsumura K."/>
            <person name="Nakajima Y."/>
            <person name="Mizuno T."/>
            <person name="Morinaga M."/>
            <person name="Sasaki M."/>
            <person name="Togashi T."/>
            <person name="Oyama M."/>
            <person name="Hata H."/>
            <person name="Watanabe M."/>
            <person name="Komatsu T."/>
            <person name="Mizushima-Sugano J."/>
            <person name="Satoh T."/>
            <person name="Shirai Y."/>
            <person name="Takahashi Y."/>
            <person name="Nakagawa K."/>
            <person name="Okumura K."/>
            <person name="Nagase T."/>
            <person name="Nomura N."/>
            <person name="Kikuchi H."/>
            <person name="Masuho Y."/>
            <person name="Yamashita R."/>
            <person name="Nakai K."/>
            <person name="Yada T."/>
            <person name="Nakamura Y."/>
            <person name="Ohara O."/>
            <person name="Isogai T."/>
            <person name="Sugano S."/>
        </authorList>
    </citation>
    <scope>NUCLEOTIDE SEQUENCE [LARGE SCALE MRNA] (ISOFORMS 1; 3 AND 4)</scope>
    <source>
        <tissue>Amygdala</tissue>
        <tissue>Hippocampus</tissue>
    </source>
</reference>
<reference key="2">
    <citation type="journal article" date="2007" name="BMC Genomics">
        <title>The full-ORF clone resource of the German cDNA consortium.</title>
        <authorList>
            <person name="Bechtel S."/>
            <person name="Rosenfelder H."/>
            <person name="Duda A."/>
            <person name="Schmidt C.P."/>
            <person name="Ernst U."/>
            <person name="Wellenreuther R."/>
            <person name="Mehrle A."/>
            <person name="Schuster C."/>
            <person name="Bahr A."/>
            <person name="Bloecker H."/>
            <person name="Heubner D."/>
            <person name="Hoerlein A."/>
            <person name="Michel G."/>
            <person name="Wedler H."/>
            <person name="Koehrer K."/>
            <person name="Ottenwaelder B."/>
            <person name="Poustka A."/>
            <person name="Wiemann S."/>
            <person name="Schupp I."/>
        </authorList>
    </citation>
    <scope>NUCLEOTIDE SEQUENCE [LARGE SCALE MRNA] (ISOFORMS 1 AND 2)</scope>
    <source>
        <tissue>Amygdala</tissue>
        <tissue>Endometrium</tissue>
    </source>
</reference>
<reference key="3">
    <citation type="journal article" date="2006" name="Nature">
        <title>DNA sequence and analysis of human chromosome 8.</title>
        <authorList>
            <person name="Nusbaum C."/>
            <person name="Mikkelsen T.S."/>
            <person name="Zody M.C."/>
            <person name="Asakawa S."/>
            <person name="Taudien S."/>
            <person name="Garber M."/>
            <person name="Kodira C.D."/>
            <person name="Schueler M.G."/>
            <person name="Shimizu A."/>
            <person name="Whittaker C.A."/>
            <person name="Chang J.L."/>
            <person name="Cuomo C.A."/>
            <person name="Dewar K."/>
            <person name="FitzGerald M.G."/>
            <person name="Yang X."/>
            <person name="Allen N.R."/>
            <person name="Anderson S."/>
            <person name="Asakawa T."/>
            <person name="Blechschmidt K."/>
            <person name="Bloom T."/>
            <person name="Borowsky M.L."/>
            <person name="Butler J."/>
            <person name="Cook A."/>
            <person name="Corum B."/>
            <person name="DeArellano K."/>
            <person name="DeCaprio D."/>
            <person name="Dooley K.T."/>
            <person name="Dorris L. III"/>
            <person name="Engels R."/>
            <person name="Gloeckner G."/>
            <person name="Hafez N."/>
            <person name="Hagopian D.S."/>
            <person name="Hall J.L."/>
            <person name="Ishikawa S.K."/>
            <person name="Jaffe D.B."/>
            <person name="Kamat A."/>
            <person name="Kudoh J."/>
            <person name="Lehmann R."/>
            <person name="Lokitsang T."/>
            <person name="Macdonald P."/>
            <person name="Major J.E."/>
            <person name="Matthews C.D."/>
            <person name="Mauceli E."/>
            <person name="Menzel U."/>
            <person name="Mihalev A.H."/>
            <person name="Minoshima S."/>
            <person name="Murayama Y."/>
            <person name="Naylor J.W."/>
            <person name="Nicol R."/>
            <person name="Nguyen C."/>
            <person name="O'Leary S.B."/>
            <person name="O'Neill K."/>
            <person name="Parker S.C.J."/>
            <person name="Polley A."/>
            <person name="Raymond C.K."/>
            <person name="Reichwald K."/>
            <person name="Rodriguez J."/>
            <person name="Sasaki T."/>
            <person name="Schilhabel M."/>
            <person name="Siddiqui R."/>
            <person name="Smith C.L."/>
            <person name="Sneddon T.P."/>
            <person name="Talamas J.A."/>
            <person name="Tenzin P."/>
            <person name="Topham K."/>
            <person name="Venkataraman V."/>
            <person name="Wen G."/>
            <person name="Yamazaki S."/>
            <person name="Young S.K."/>
            <person name="Zeng Q."/>
            <person name="Zimmer A.R."/>
            <person name="Rosenthal A."/>
            <person name="Birren B.W."/>
            <person name="Platzer M."/>
            <person name="Shimizu N."/>
            <person name="Lander E.S."/>
        </authorList>
    </citation>
    <scope>NUCLEOTIDE SEQUENCE [LARGE SCALE GENOMIC DNA]</scope>
</reference>
<reference key="4">
    <citation type="journal article" date="2004" name="Genome Res.">
        <title>The status, quality, and expansion of the NIH full-length cDNA project: the Mammalian Gene Collection (MGC).</title>
        <authorList>
            <consortium name="The MGC Project Team"/>
        </authorList>
    </citation>
    <scope>NUCLEOTIDE SEQUENCE [LARGE SCALE MRNA] (ISOFORM 1)</scope>
    <source>
        <tissue>Cervix</tissue>
    </source>
</reference>
<reference key="5">
    <citation type="submission" date="2005-04" db="EMBL/GenBank/DDBJ databases">
        <authorList>
            <person name="Suzuki Y."/>
            <person name="Sugano S."/>
            <person name="Totoki Y."/>
            <person name="Toyoda A."/>
            <person name="Takeda T."/>
            <person name="Sakaki Y."/>
            <person name="Tanaka A."/>
            <person name="Yokoyama S."/>
        </authorList>
    </citation>
    <scope>NUCLEOTIDE SEQUENCE [LARGE SCALE MRNA] OF 24-547 (ISOFORM 1)</scope>
    <source>
        <tissue>Thyroid</tissue>
    </source>
</reference>
<reference key="6">
    <citation type="journal article" date="2002" name="J. Biol. Chem.">
        <title>Purification and characterization of the human elongator complex.</title>
        <authorList>
            <person name="Hawkes N.A."/>
            <person name="Otero G."/>
            <person name="Winkler G.S."/>
            <person name="Marshall N."/>
            <person name="Dahmus M.E."/>
            <person name="Krappmann D."/>
            <person name="Scheidereit C."/>
            <person name="Thomas C.L."/>
            <person name="Schiavo G."/>
            <person name="Erdjument-Bromage H."/>
            <person name="Tempst P."/>
            <person name="Svejstrup J.Q."/>
        </authorList>
    </citation>
    <scope>IDENTIFICATION IN THE ELONGATOR COMPLEX</scope>
    <scope>SUBCELLULAR LOCATION</scope>
    <scope>IDENTIFICATION BY MASS SPECTROMETRY</scope>
</reference>
<reference key="7">
    <citation type="journal article" date="2002" name="Proc. Natl. Acad. Sci. U.S.A.">
        <title>Human Elongator facilitates RNA polymerase II transcription through chromatin.</title>
        <authorList>
            <person name="Kim J.H."/>
            <person name="Lane W.S."/>
            <person name="Reinberg D."/>
        </authorList>
    </citation>
    <scope>IDENTIFICATION IN THE ELONGATOR CORE COMPLEX</scope>
    <scope>INTERACTION WITH ELP1</scope>
    <scope>SUBCELLULAR LOCATION</scope>
    <scope>IDENTIFICATION BY MASS SPECTROMETRY</scope>
</reference>
<reference key="8">
    <citation type="journal article" date="2005" name="Mol. Genet. Genomics">
        <title>The Elp3 subunit of human Elongator complex is functionally similar to its counterpart in yeast.</title>
        <authorList>
            <person name="Li F."/>
            <person name="Lu J."/>
            <person name="Han Q."/>
            <person name="Zhang G."/>
            <person name="Huang B."/>
        </authorList>
    </citation>
    <scope>DISPUTED FUNCTION IN HISTONE ACETYLATION</scope>
</reference>
<reference key="9">
    <citation type="journal article" date="2005" name="Nat. Biotechnol.">
        <title>Immunoaffinity profiling of tyrosine phosphorylation in cancer cells.</title>
        <authorList>
            <person name="Rush J."/>
            <person name="Moritz A."/>
            <person name="Lee K.A."/>
            <person name="Guo A."/>
            <person name="Goss V.L."/>
            <person name="Spek E.J."/>
            <person name="Zhang H."/>
            <person name="Zha X.-M."/>
            <person name="Polakiewicz R.D."/>
            <person name="Comb M.J."/>
        </authorList>
    </citation>
    <scope>PHOSPHORYLATION [LARGE SCALE ANALYSIS] AT TYR-202</scope>
    <scope>IDENTIFICATION BY MASS SPECTROMETRY [LARGE SCALE ANALYSIS]</scope>
</reference>
<reference key="10">
    <citation type="journal article" date="2006" name="Mol. Cell">
        <title>Transcription impairment and cell migration defects in elongator-depleted cells: implication for familial dysautonomia.</title>
        <authorList>
            <person name="Close P."/>
            <person name="Hawkes N."/>
            <person name="Cornez I."/>
            <person name="Creppe C."/>
            <person name="Lambert C.A."/>
            <person name="Rogister B."/>
            <person name="Siebenlist U."/>
            <person name="Merville M.P."/>
            <person name="Slaugenhaupt S.A."/>
            <person name="Bours V."/>
            <person name="Svejstrup J.Q."/>
            <person name="Chariot A."/>
        </authorList>
    </citation>
    <scope>DISPUTED FUNCTION IN HISTONE ACETYLATION</scope>
</reference>
<reference key="11">
    <citation type="journal article" date="2009" name="Cell">
        <title>Elongator controls the migration and differentiation of cortical neurons through acetylation of alpha-tubulin.</title>
        <authorList>
            <person name="Creppe C."/>
            <person name="Malinouskaya L."/>
            <person name="Volvert M.L."/>
            <person name="Gillard M."/>
            <person name="Close P."/>
            <person name="Malaise O."/>
            <person name="Laguesse S."/>
            <person name="Cornez I."/>
            <person name="Rahmouni S."/>
            <person name="Ormenese S."/>
            <person name="Belachew S."/>
            <person name="Malgrange B."/>
            <person name="Chapelle J.P."/>
            <person name="Siebenlist U."/>
            <person name="Moonen G."/>
            <person name="Chariot A."/>
            <person name="Nguyen L."/>
        </authorList>
    </citation>
    <scope>FUNCTION</scope>
    <scope>SUBCELLULAR LOCATION</scope>
    <scope>INTERACTION WITH ELP1 AND ALPHA-TUBULIN</scope>
</reference>
<reference key="12">
    <citation type="journal article" date="2009" name="Hum. Mol. Genet.">
        <title>Variants of the elongator protein 3 (ELP3) gene are associated with motor neuron degeneration.</title>
        <authorList>
            <person name="Simpson C.L."/>
            <person name="Lemmens R."/>
            <person name="Miskiewicz K."/>
            <person name="Broom W.J."/>
            <person name="Hansen V.K."/>
            <person name="van Vught P.W."/>
            <person name="Landers J.E."/>
            <person name="Sapp P."/>
            <person name="Van Den Bosch L."/>
            <person name="Knight J."/>
            <person name="Neale B.M."/>
            <person name="Turner M.R."/>
            <person name="Veldink J.H."/>
            <person name="Ophoff R.A."/>
            <person name="Tripathi V.B."/>
            <person name="Beleza A."/>
            <person name="Shah M.N."/>
            <person name="Proitsi P."/>
            <person name="Van Hoecke A."/>
            <person name="Carmeliet P."/>
            <person name="Horvitz H.R."/>
            <person name="Leigh P.N."/>
            <person name="Shaw C.E."/>
            <person name="van den Berg L.H."/>
            <person name="Sham P.C."/>
            <person name="Powell J.F."/>
            <person name="Verstreken P."/>
            <person name="Brown R.H. Jr."/>
            <person name="Robberecht W."/>
            <person name="Al-Chalabi A."/>
        </authorList>
    </citation>
    <scope>TISSUE SPECIFICITY</scope>
    <scope>INVOLVEMENT IN ALS</scope>
</reference>
<reference key="13">
    <citation type="journal article" date="2009" name="Sci. Signal.">
        <title>Quantitative phosphoproteomic analysis of T cell receptor signaling reveals system-wide modulation of protein-protein interactions.</title>
        <authorList>
            <person name="Mayya V."/>
            <person name="Lundgren D.H."/>
            <person name="Hwang S.-I."/>
            <person name="Rezaul K."/>
            <person name="Wu L."/>
            <person name="Eng J.K."/>
            <person name="Rodionov V."/>
            <person name="Han D.K."/>
        </authorList>
    </citation>
    <scope>IDENTIFICATION BY MASS SPECTROMETRY [LARGE SCALE ANALYSIS]</scope>
    <source>
        <tissue>Leukemic T-cell</tissue>
    </source>
</reference>
<reference key="14">
    <citation type="journal article" date="2011" name="BMC Syst. Biol.">
        <title>Initial characterization of the human central proteome.</title>
        <authorList>
            <person name="Burkard T.R."/>
            <person name="Planyavsky M."/>
            <person name="Kaupe I."/>
            <person name="Breitwieser F.P."/>
            <person name="Buerckstuemmer T."/>
            <person name="Bennett K.L."/>
            <person name="Superti-Furga G."/>
            <person name="Colinge J."/>
        </authorList>
    </citation>
    <scope>IDENTIFICATION BY MASS SPECTROMETRY [LARGE SCALE ANALYSIS]</scope>
</reference>
<reference key="15">
    <citation type="journal article" date="2012" name="J. Biol. Chem.">
        <title>DERP6 (ELP5) and C3ORF75 (ELP6) regulate tumorigenicity and migration of melanoma cells as subunits of Elongator.</title>
        <authorList>
            <person name="Close P."/>
            <person name="Gillard M."/>
            <person name="Ladang A."/>
            <person name="Jiang Z."/>
            <person name="Papuga J."/>
            <person name="Hawkes N."/>
            <person name="Nguyen L."/>
            <person name="Chapelle J.P."/>
            <person name="Bouillenne F."/>
            <person name="Svejstrup J."/>
            <person name="Fillet M."/>
            <person name="Chariot A."/>
        </authorList>
    </citation>
    <scope>IDENTIFICATION IN THE ELONGATOR COMPLEX</scope>
    <scope>SUBCELLULAR LOCATION</scope>
</reference>
<reference key="16">
    <citation type="journal article" date="2012" name="Mol. Cell. Proteomics">
        <title>Systematic analysis of protein pools, isoforms, and modifications affecting turnover and subcellular localization.</title>
        <authorList>
            <person name="Ahmad Y."/>
            <person name="Boisvert F.M."/>
            <person name="Lundberg E."/>
            <person name="Uhlen M."/>
            <person name="Lamond A.I."/>
        </authorList>
    </citation>
    <scope>SUBCELLULAR LOCATION</scope>
</reference>
<reference key="17">
    <citation type="journal article" date="2014" name="Mol. Cell. Proteomics">
        <title>Immunoaffinity enrichment and mass spectrometry analysis of protein methylation.</title>
        <authorList>
            <person name="Guo A."/>
            <person name="Gu H."/>
            <person name="Zhou J."/>
            <person name="Mulhern D."/>
            <person name="Wang Y."/>
            <person name="Lee K.A."/>
            <person name="Yang V."/>
            <person name="Aguiar M."/>
            <person name="Kornhauser J."/>
            <person name="Jia X."/>
            <person name="Ren J."/>
            <person name="Beausoleil S.A."/>
            <person name="Silva J.C."/>
            <person name="Vemulapalli V."/>
            <person name="Bedford M.T."/>
            <person name="Comb M.J."/>
        </authorList>
    </citation>
    <scope>METHYLATION [LARGE SCALE ANALYSIS] AT LYS-229</scope>
    <scope>IDENTIFICATION BY MASS SPECTROMETRY [LARGE SCALE ANALYSIS]</scope>
    <source>
        <tissue>Colon carcinoma</tissue>
    </source>
</reference>
<reference key="18">
    <citation type="journal article" date="2015" name="Structure">
        <title>The Elp2 subunit is essential for elongator complex assembly and functional regulation.</title>
        <authorList>
            <person name="Dong C."/>
            <person name="Lin Z."/>
            <person name="Diao W."/>
            <person name="Li D."/>
            <person name="Chu X."/>
            <person name="Wang Z."/>
            <person name="Zhou H."/>
            <person name="Xie Z."/>
            <person name="Shen Y."/>
            <person name="Long J."/>
        </authorList>
    </citation>
    <scope>INTERACTION WITH ELP1 AND ELP2</scope>
</reference>
<reference key="19">
    <citation type="journal article" date="2018" name="Cell. Mol. Life Sci.">
        <title>Structural insights into the function of Elongator.</title>
        <authorList>
            <person name="Dalwadi U."/>
            <person name="Yip C.K."/>
        </authorList>
    </citation>
    <scope>REVIEW</scope>
</reference>
<reference key="20">
    <citation type="journal article" date="2019" name="Biochem. J.">
        <title>ELP3 Acetyltransferase is phosphorylated and regulated by the oncogenic anaplastic lymphoma kinase (ALK).</title>
        <authorList>
            <person name="Li M.T."/>
            <person name="Liang J.Y."/>
            <person name="Sun Y.P."/>
            <person name="Jin J."/>
            <person name="Xiong Y."/>
            <person name="Guan K.L."/>
            <person name="Yuan H.X."/>
        </authorList>
    </citation>
    <scope>PHOSPHORYLATION AT TYR-202 AND TYR-251</scope>
    <scope>MUTAGENESIS OF TYR-202; TYR-207; TYR-251; TYR-318; TYR-329 AND TYR-427</scope>
</reference>
<reference key="21">
    <citation type="journal article" date="2018" name="Hum. Mol. Genet.">
        <title>Elongator subunit 3 (ELP3) modifies ALS through tRNA modification.</title>
        <authorList>
            <person name="Bento-Abreu A."/>
            <person name="Jager G."/>
            <person name="Swinnen B."/>
            <person name="Rue L."/>
            <person name="Hendrickx S."/>
            <person name="Jones A."/>
            <person name="Staats K.A."/>
            <person name="Taes I."/>
            <person name="Eykens C."/>
            <person name="Nonneman A."/>
            <person name="Nuyts R."/>
            <person name="Timmers M."/>
            <person name="Silva L."/>
            <person name="Chariot A."/>
            <person name="Nguyen L."/>
            <person name="Ravits J."/>
            <person name="Lemmens R."/>
            <person name="Cabooter D."/>
            <person name="Van Den Bosch L."/>
            <person name="Van Damme P."/>
            <person name="Al-Chalabi A."/>
            <person name="Bystrom A."/>
            <person name="Robberecht W."/>
        </authorList>
    </citation>
    <scope>INVOLVEMENT IN ALS</scope>
    <scope>FUNCTION</scope>
    <scope>PATHWAY</scope>
</reference>